<proteinExistence type="inferred from homology"/>
<reference key="1">
    <citation type="journal article" date="2005" name="Nucleic Acids Res.">
        <title>Genome dynamics and diversity of Shigella species, the etiologic agents of bacillary dysentery.</title>
        <authorList>
            <person name="Yang F."/>
            <person name="Yang J."/>
            <person name="Zhang X."/>
            <person name="Chen L."/>
            <person name="Jiang Y."/>
            <person name="Yan Y."/>
            <person name="Tang X."/>
            <person name="Wang J."/>
            <person name="Xiong Z."/>
            <person name="Dong J."/>
            <person name="Xue Y."/>
            <person name="Zhu Y."/>
            <person name="Xu X."/>
            <person name="Sun L."/>
            <person name="Chen S."/>
            <person name="Nie H."/>
            <person name="Peng J."/>
            <person name="Xu J."/>
            <person name="Wang Y."/>
            <person name="Yuan Z."/>
            <person name="Wen Y."/>
            <person name="Yao Z."/>
            <person name="Shen Y."/>
            <person name="Qiang B."/>
            <person name="Hou Y."/>
            <person name="Yu J."/>
            <person name="Jin Q."/>
        </authorList>
    </citation>
    <scope>NUCLEOTIDE SEQUENCE [LARGE SCALE GENOMIC DNA]</scope>
    <source>
        <strain>Sb227</strain>
    </source>
</reference>
<feature type="chain" id="PRO_1000014079" description="Nickel-responsive regulator">
    <location>
        <begin position="1"/>
        <end position="133"/>
    </location>
</feature>
<feature type="binding site" evidence="1">
    <location>
        <position position="76"/>
    </location>
    <ligand>
        <name>Ni(2+)</name>
        <dbReference type="ChEBI" id="CHEBI:49786"/>
    </ligand>
</feature>
<feature type="binding site" evidence="1">
    <location>
        <position position="87"/>
    </location>
    <ligand>
        <name>Ni(2+)</name>
        <dbReference type="ChEBI" id="CHEBI:49786"/>
    </ligand>
</feature>
<feature type="binding site" evidence="1">
    <location>
        <position position="89"/>
    </location>
    <ligand>
        <name>Ni(2+)</name>
        <dbReference type="ChEBI" id="CHEBI:49786"/>
    </ligand>
</feature>
<feature type="binding site" evidence="1">
    <location>
        <position position="95"/>
    </location>
    <ligand>
        <name>Ni(2+)</name>
        <dbReference type="ChEBI" id="CHEBI:49786"/>
    </ligand>
</feature>
<organism>
    <name type="scientific">Shigella boydii serotype 4 (strain Sb227)</name>
    <dbReference type="NCBI Taxonomy" id="300268"/>
    <lineage>
        <taxon>Bacteria</taxon>
        <taxon>Pseudomonadati</taxon>
        <taxon>Pseudomonadota</taxon>
        <taxon>Gammaproteobacteria</taxon>
        <taxon>Enterobacterales</taxon>
        <taxon>Enterobacteriaceae</taxon>
        <taxon>Shigella</taxon>
    </lineage>
</organism>
<keyword id="KW-0238">DNA-binding</keyword>
<keyword id="KW-0479">Metal-binding</keyword>
<keyword id="KW-0533">Nickel</keyword>
<keyword id="KW-0678">Repressor</keyword>
<keyword id="KW-0804">Transcription</keyword>
<keyword id="KW-0805">Transcription regulation</keyword>
<name>NIKR_SHIBS</name>
<dbReference type="EMBL" id="CP000036">
    <property type="protein sequence ID" value="ABB67963.1"/>
    <property type="molecule type" value="Genomic_DNA"/>
</dbReference>
<dbReference type="RefSeq" id="WP_001190062.1">
    <property type="nucleotide sequence ID" value="NC_007613.1"/>
</dbReference>
<dbReference type="SMR" id="Q31VE5"/>
<dbReference type="GeneID" id="93778510"/>
<dbReference type="KEGG" id="sbo:SBO_3478"/>
<dbReference type="HOGENOM" id="CLU_113319_1_4_6"/>
<dbReference type="Proteomes" id="UP000007067">
    <property type="component" value="Chromosome"/>
</dbReference>
<dbReference type="GO" id="GO:0003700">
    <property type="term" value="F:DNA-binding transcription factor activity"/>
    <property type="evidence" value="ECO:0007669"/>
    <property type="project" value="UniProtKB-UniRule"/>
</dbReference>
<dbReference type="GO" id="GO:0016151">
    <property type="term" value="F:nickel cation binding"/>
    <property type="evidence" value="ECO:0007669"/>
    <property type="project" value="UniProtKB-UniRule"/>
</dbReference>
<dbReference type="GO" id="GO:0043565">
    <property type="term" value="F:sequence-specific DNA binding"/>
    <property type="evidence" value="ECO:0007669"/>
    <property type="project" value="UniProtKB-ARBA"/>
</dbReference>
<dbReference type="GO" id="GO:0010045">
    <property type="term" value="P:response to nickel cation"/>
    <property type="evidence" value="ECO:0007669"/>
    <property type="project" value="InterPro"/>
</dbReference>
<dbReference type="CDD" id="cd22231">
    <property type="entry name" value="RHH_NikR_HicB-like"/>
    <property type="match status" value="1"/>
</dbReference>
<dbReference type="FunFam" id="1.10.1220.10:FF:000001">
    <property type="entry name" value="Nickel-responsive regulator"/>
    <property type="match status" value="1"/>
</dbReference>
<dbReference type="FunFam" id="3.30.70.1150:FF:000002">
    <property type="entry name" value="Nickel-responsive regulator"/>
    <property type="match status" value="1"/>
</dbReference>
<dbReference type="Gene3D" id="3.30.70.1150">
    <property type="entry name" value="ACT-like. Chain A, domain 2"/>
    <property type="match status" value="1"/>
</dbReference>
<dbReference type="Gene3D" id="1.10.1220.10">
    <property type="entry name" value="Met repressor-like"/>
    <property type="match status" value="1"/>
</dbReference>
<dbReference type="HAMAP" id="MF_00476">
    <property type="entry name" value="NikR"/>
    <property type="match status" value="1"/>
</dbReference>
<dbReference type="InterPro" id="IPR027271">
    <property type="entry name" value="Acetolactate_synth/TF_NikR_C"/>
</dbReference>
<dbReference type="InterPro" id="IPR045865">
    <property type="entry name" value="ACT-like_dom_sf"/>
</dbReference>
<dbReference type="InterPro" id="IPR013321">
    <property type="entry name" value="Arc_rbn_hlx_hlx"/>
</dbReference>
<dbReference type="InterPro" id="IPR002145">
    <property type="entry name" value="CopG"/>
</dbReference>
<dbReference type="InterPro" id="IPR050192">
    <property type="entry name" value="CopG/NikR_regulator"/>
</dbReference>
<dbReference type="InterPro" id="IPR022988">
    <property type="entry name" value="Ni_resp_reg_NikR"/>
</dbReference>
<dbReference type="InterPro" id="IPR014160">
    <property type="entry name" value="Nickel_NikR_proteobac"/>
</dbReference>
<dbReference type="InterPro" id="IPR010985">
    <property type="entry name" value="Ribbon_hlx_hlx"/>
</dbReference>
<dbReference type="InterPro" id="IPR014864">
    <property type="entry name" value="TF_NikR_Ni-bd_C"/>
</dbReference>
<dbReference type="NCBIfam" id="TIGR02793">
    <property type="entry name" value="nikR"/>
    <property type="match status" value="1"/>
</dbReference>
<dbReference type="NCBIfam" id="NF002815">
    <property type="entry name" value="PRK02967.1"/>
    <property type="match status" value="1"/>
</dbReference>
<dbReference type="NCBIfam" id="NF003381">
    <property type="entry name" value="PRK04460.1"/>
    <property type="match status" value="1"/>
</dbReference>
<dbReference type="PANTHER" id="PTHR34719">
    <property type="entry name" value="NICKEL-RESPONSIVE REGULATOR"/>
    <property type="match status" value="1"/>
</dbReference>
<dbReference type="PANTHER" id="PTHR34719:SF2">
    <property type="entry name" value="NICKEL-RESPONSIVE REGULATOR"/>
    <property type="match status" value="1"/>
</dbReference>
<dbReference type="Pfam" id="PF08753">
    <property type="entry name" value="NikR_C"/>
    <property type="match status" value="1"/>
</dbReference>
<dbReference type="Pfam" id="PF01402">
    <property type="entry name" value="RHH_1"/>
    <property type="match status" value="1"/>
</dbReference>
<dbReference type="SUPFAM" id="SSF55021">
    <property type="entry name" value="ACT-like"/>
    <property type="match status" value="1"/>
</dbReference>
<dbReference type="SUPFAM" id="SSF47598">
    <property type="entry name" value="Ribbon-helix-helix"/>
    <property type="match status" value="1"/>
</dbReference>
<gene>
    <name evidence="1" type="primary">nikR</name>
    <name type="ordered locus">SBO_3478</name>
</gene>
<comment type="function">
    <text evidence="1">Transcriptional repressor of the nikABCDE operon. Is active in the presence of excessive concentrations of intracellular nickel.</text>
</comment>
<comment type="cofactor">
    <cofactor evidence="1">
        <name>Ni(2+)</name>
        <dbReference type="ChEBI" id="CHEBI:49786"/>
    </cofactor>
    <text evidence="1">Binds 1 nickel ion per subunit.</text>
</comment>
<comment type="subunit">
    <text evidence="1">Homotetramer.</text>
</comment>
<comment type="similarity">
    <text evidence="1">Belongs to the transcriptional regulatory CopG/NikR family.</text>
</comment>
<evidence type="ECO:0000255" key="1">
    <source>
        <dbReference type="HAMAP-Rule" id="MF_00476"/>
    </source>
</evidence>
<accession>Q31VE5</accession>
<protein>
    <recommendedName>
        <fullName evidence="1">Nickel-responsive regulator</fullName>
    </recommendedName>
</protein>
<sequence>MQRVTITLDDDLLETLDSLSQRRGYNNRSEAIRDILRSALAQEATQQHGTQGFAVLSYVYEHEKRDLASRIVSTQHHHHDLSVATLHVHINHDDCLEIAVLKGDMGDVQHFADDVIAQRGVRHGHLQCLPKED</sequence>